<accession>P10816</accession>
<reference key="1">
    <citation type="journal article" date="1989" name="Nucleic Acids Res.">
        <title>Nucleotide sequence of the Sesbania rostrata leghemoglobin (Srglb3) gene.</title>
        <authorList>
            <person name="Welters P."/>
            <person name="Metz B."/>
            <person name="Schell J."/>
            <person name="de Bruijn F.J."/>
        </authorList>
    </citation>
    <scope>NUCLEOTIDE SEQUENCE [GENOMIC DNA]</scope>
</reference>
<reference key="2">
    <citation type="journal article" date="1988" name="Mol. Gen. Genet.">
        <title>Primary structure and promoter analysis of leghemoglobin genes of the stem-nodulated tropical legume Sesbania rostrata: conserved coding sequences, cis-elements and trans-acting factors.</title>
        <authorList>
            <person name="Metz B.A."/>
            <person name="Welters P."/>
            <person name="Hoffmann H.J."/>
            <person name="Jensen E.O."/>
            <person name="Schell J."/>
            <person name="de Bruijn F.J."/>
        </authorList>
    </citation>
    <scope>NUCLEOTIDE SEQUENCE [GENOMIC DNA] OF 1-8</scope>
    <scope>TISSUE SPECIFICITY</scope>
    <source>
        <tissue>Leaf</tissue>
        <tissue>Stem nodule</tissue>
    </source>
</reference>
<reference key="3">
    <citation type="journal article" date="1994" name="Plant Cell">
        <title>Site-specific mutagenesis of the nodule-infected cell expression (NICE) element and the AT-rich element ATRE-BS2* of the Sesbania rostrata leghemoglobin glb3 promoter.</title>
        <authorList>
            <person name="Szczyglowski K."/>
            <person name="Szabados L."/>
            <person name="Fujimoto S.Y."/>
            <person name="Silver D."/>
            <person name="de Bruijn F.J."/>
        </authorList>
    </citation>
    <scope>TISSUE SPECIFICITY</scope>
</reference>
<proteinExistence type="evidence at transcript level"/>
<sequence length="148" mass="15990">MGFTEKQEALVNASYEAFKQNLPGNSVLFYSFILEKAPAAKGMFSFLKDFDEVPQNNPSLQAHAEKVFGLVRDSAAQLRATGVVVLADASLGSVHVQKGVLDPHFVVVKEALLKTLKEAGGATWSDEVSNAWEVAYDELSAAIKKAMS</sequence>
<feature type="initiator methionine" description="Removed" evidence="4">
    <location>
        <position position="1"/>
    </location>
</feature>
<feature type="chain" id="PRO_0000193001" description="Leghemoglobin 3">
    <location>
        <begin position="2"/>
        <end position="148"/>
    </location>
</feature>
<feature type="domain" description="Globin" evidence="7">
    <location>
        <begin position="2"/>
        <end position="148"/>
    </location>
</feature>
<feature type="binding site" evidence="3">
    <location>
        <position position="45"/>
    </location>
    <ligand>
        <name>heme b</name>
        <dbReference type="ChEBI" id="CHEBI:60344"/>
    </ligand>
</feature>
<feature type="binding site" evidence="3">
    <location>
        <position position="63"/>
    </location>
    <ligand>
        <name>O2</name>
        <dbReference type="ChEBI" id="CHEBI:15379"/>
    </ligand>
</feature>
<feature type="binding site" evidence="3">
    <location>
        <position position="66"/>
    </location>
    <ligand>
        <name>heme b</name>
        <dbReference type="ChEBI" id="CHEBI:60344"/>
    </ligand>
</feature>
<feature type="binding site" description="proximal binding residue" evidence="7">
    <location>
        <position position="95"/>
    </location>
    <ligand>
        <name>heme b</name>
        <dbReference type="ChEBI" id="CHEBI:60344"/>
    </ligand>
    <ligandPart>
        <name>Fe</name>
        <dbReference type="ChEBI" id="CHEBI:18248"/>
    </ligandPart>
</feature>
<feature type="binding site" evidence="3">
    <location>
        <position position="98"/>
    </location>
    <ligand>
        <name>heme b</name>
        <dbReference type="ChEBI" id="CHEBI:60344"/>
    </ligand>
</feature>
<feature type="modified residue" description="Nitrated tyrosine" evidence="1">
    <location>
        <position position="30"/>
    </location>
</feature>
<feature type="modified residue" description="Phosphoserine" evidence="5">
    <location>
        <position position="45"/>
    </location>
</feature>
<feature type="modified residue" description="Nitrated tyrosine" evidence="1">
    <location>
        <position position="136"/>
    </location>
</feature>
<dbReference type="EMBL" id="X13814">
    <property type="protein sequence ID" value="CAA32043.1"/>
    <property type="molecule type" value="Genomic_DNA"/>
</dbReference>
<dbReference type="EMBL" id="X13504">
    <property type="protein sequence ID" value="CAA31858.1"/>
    <property type="molecule type" value="Genomic_DNA"/>
</dbReference>
<dbReference type="PIR" id="S10238">
    <property type="entry name" value="S10238"/>
</dbReference>
<dbReference type="SMR" id="P10816"/>
<dbReference type="GO" id="GO:0005829">
    <property type="term" value="C:cytosol"/>
    <property type="evidence" value="ECO:0007669"/>
    <property type="project" value="UniProtKB-SubCell"/>
</dbReference>
<dbReference type="GO" id="GO:0005634">
    <property type="term" value="C:nucleus"/>
    <property type="evidence" value="ECO:0007669"/>
    <property type="project" value="UniProtKB-SubCell"/>
</dbReference>
<dbReference type="GO" id="GO:0020037">
    <property type="term" value="F:heme binding"/>
    <property type="evidence" value="ECO:0007669"/>
    <property type="project" value="InterPro"/>
</dbReference>
<dbReference type="GO" id="GO:0046872">
    <property type="term" value="F:metal ion binding"/>
    <property type="evidence" value="ECO:0007669"/>
    <property type="project" value="UniProtKB-KW"/>
</dbReference>
<dbReference type="GO" id="GO:0019825">
    <property type="term" value="F:oxygen binding"/>
    <property type="evidence" value="ECO:0007669"/>
    <property type="project" value="InterPro"/>
</dbReference>
<dbReference type="GO" id="GO:0005344">
    <property type="term" value="F:oxygen carrier activity"/>
    <property type="evidence" value="ECO:0007669"/>
    <property type="project" value="UniProtKB-KW"/>
</dbReference>
<dbReference type="GO" id="GO:0009877">
    <property type="term" value="P:nodulation"/>
    <property type="evidence" value="ECO:0007669"/>
    <property type="project" value="UniProtKB-KW"/>
</dbReference>
<dbReference type="CDD" id="cd08923">
    <property type="entry name" value="class1-2_nsHbs_Lbs"/>
    <property type="match status" value="1"/>
</dbReference>
<dbReference type="Gene3D" id="1.10.490.10">
    <property type="entry name" value="Globins"/>
    <property type="match status" value="1"/>
</dbReference>
<dbReference type="InterPro" id="IPR000971">
    <property type="entry name" value="Globin"/>
</dbReference>
<dbReference type="InterPro" id="IPR009050">
    <property type="entry name" value="Globin-like_sf"/>
</dbReference>
<dbReference type="InterPro" id="IPR012292">
    <property type="entry name" value="Globin/Proto"/>
</dbReference>
<dbReference type="InterPro" id="IPR001032">
    <property type="entry name" value="Leghaemoglobin-like"/>
</dbReference>
<dbReference type="InterPro" id="IPR019824">
    <property type="entry name" value="Leghaemoglobin_Fe_BS"/>
</dbReference>
<dbReference type="PANTHER" id="PTHR22924">
    <property type="entry name" value="LEGHEMOGLOBIN-RELATED"/>
    <property type="match status" value="1"/>
</dbReference>
<dbReference type="PANTHER" id="PTHR22924:SF92">
    <property type="entry name" value="NON-SYMBIOTIC HEMOGLOBIN 2"/>
    <property type="match status" value="1"/>
</dbReference>
<dbReference type="Pfam" id="PF00042">
    <property type="entry name" value="Globin"/>
    <property type="match status" value="1"/>
</dbReference>
<dbReference type="PRINTS" id="PR00188">
    <property type="entry name" value="PLANTGLOBIN"/>
</dbReference>
<dbReference type="SUPFAM" id="SSF46458">
    <property type="entry name" value="Globin-like"/>
    <property type="match status" value="1"/>
</dbReference>
<dbReference type="PROSITE" id="PS01033">
    <property type="entry name" value="GLOBIN"/>
    <property type="match status" value="1"/>
</dbReference>
<dbReference type="PROSITE" id="PS00208">
    <property type="entry name" value="PLANT_GLOBIN"/>
    <property type="match status" value="1"/>
</dbReference>
<gene>
    <name evidence="9" type="primary">GLB3</name>
</gene>
<keyword id="KW-0963">Cytoplasm</keyword>
<keyword id="KW-0349">Heme</keyword>
<keyword id="KW-0408">Iron</keyword>
<keyword id="KW-0479">Metal-binding</keyword>
<keyword id="KW-0944">Nitration</keyword>
<keyword id="KW-0535">Nitrogen fixation</keyword>
<keyword id="KW-0536">Nodulation</keyword>
<keyword id="KW-0539">Nucleus</keyword>
<keyword id="KW-0561">Oxygen transport</keyword>
<keyword id="KW-0597">Phosphoprotein</keyword>
<keyword id="KW-0813">Transport</keyword>
<organism>
    <name type="scientific">Sesbania rostrata</name>
    <dbReference type="NCBI Taxonomy" id="3895"/>
    <lineage>
        <taxon>Eukaryota</taxon>
        <taxon>Viridiplantae</taxon>
        <taxon>Streptophyta</taxon>
        <taxon>Embryophyta</taxon>
        <taxon>Tracheophyta</taxon>
        <taxon>Spermatophyta</taxon>
        <taxon>Magnoliopsida</taxon>
        <taxon>eudicotyledons</taxon>
        <taxon>Gunneridae</taxon>
        <taxon>Pentapetalae</taxon>
        <taxon>rosids</taxon>
        <taxon>fabids</taxon>
        <taxon>Fabales</taxon>
        <taxon>Fabaceae</taxon>
        <taxon>Papilionoideae</taxon>
        <taxon>50 kb inversion clade</taxon>
        <taxon>NPAAA clade</taxon>
        <taxon>Hologalegina</taxon>
        <taxon>robinioid clade</taxon>
        <taxon>Sesbanieae</taxon>
        <taxon>Sesbania</taxon>
    </lineage>
</organism>
<name>LGB3_SESRO</name>
<protein>
    <recommendedName>
        <fullName evidence="9">Leghemoglobin 3</fullName>
        <shortName evidence="9">Srglb3</shortName>
    </recommendedName>
</protein>
<comment type="function">
    <text evidence="2 6">Leghemoglobin that reversibly binds oxygen O(2) through a pentacoordinated heme iron (By similarity). In stem nodules, facilitates the diffusion of oxygen to the bacteroids while preventing the bacterial nitrogenase from being inactivated by buffering dioxygen, nitric oxide and carbon monoxide, and promoting the formation of reactive oxygen species (ROS, e.g. H(2)O(2)) (By similarity). This role is essential for symbiotic nitrogen fixation (SNF) (By similarity).</text>
</comment>
<comment type="subunit">
    <text evidence="3">Monomer.</text>
</comment>
<comment type="subcellular location">
    <subcellularLocation>
        <location evidence="3">Cytoplasm</location>
        <location evidence="3">Cytosol</location>
    </subcellularLocation>
    <subcellularLocation>
        <location evidence="3">Nucleus</location>
    </subcellularLocation>
</comment>
<comment type="tissue specificity">
    <text evidence="8">Stem nodules.</text>
</comment>
<comment type="PTM">
    <text evidence="1">Nitrated in effective nodules and particularly in hypoxic conditions; this mechanism may play a protective role in the symbiosis by buffering toxic peroxynitrite NO(2)(-). Nitration level decrease during nodule senescence.</text>
</comment>
<comment type="PTM">
    <text evidence="5">Phosphorylation at Ser-45 disrupts the molecular environment of its porphyrin ring oxygen binding pocket, thus leading to a reduced oxygen consumption and to the delivery of oxygen O(2) to symbiosomes.</text>
</comment>
<comment type="similarity">
    <text evidence="10">Belongs to the plant globin family.</text>
</comment>
<evidence type="ECO:0000250" key="1">
    <source>
        <dbReference type="UniProtKB" id="P02234"/>
    </source>
</evidence>
<evidence type="ECO:0000250" key="2">
    <source>
        <dbReference type="UniProtKB" id="P02237"/>
    </source>
</evidence>
<evidence type="ECO:0000250" key="3">
    <source>
        <dbReference type="UniProtKB" id="P02240"/>
    </source>
</evidence>
<evidence type="ECO:0000250" key="4">
    <source>
        <dbReference type="UniProtKB" id="P14848"/>
    </source>
</evidence>
<evidence type="ECO:0000250" key="5">
    <source>
        <dbReference type="UniProtKB" id="Q3C1F7"/>
    </source>
</evidence>
<evidence type="ECO:0000250" key="6">
    <source>
        <dbReference type="UniProtKB" id="Q43296"/>
    </source>
</evidence>
<evidence type="ECO:0000255" key="7">
    <source>
        <dbReference type="PROSITE-ProRule" id="PRU00238"/>
    </source>
</evidence>
<evidence type="ECO:0000269" key="8">
    <source>
    </source>
</evidence>
<evidence type="ECO:0000303" key="9">
    <source>
    </source>
</evidence>
<evidence type="ECO:0000305" key="10"/>